<accession>A8L6C4</accession>
<name>RL19_PARS2</name>
<keyword id="KW-0687">Ribonucleoprotein</keyword>
<keyword id="KW-0689">Ribosomal protein</keyword>
<dbReference type="EMBL" id="CP000820">
    <property type="protein sequence ID" value="ABW10606.1"/>
    <property type="molecule type" value="Genomic_DNA"/>
</dbReference>
<dbReference type="RefSeq" id="WP_020458783.1">
    <property type="nucleotide sequence ID" value="NC_009921.1"/>
</dbReference>
<dbReference type="SMR" id="A8L6C4"/>
<dbReference type="STRING" id="298653.Franean1_1152"/>
<dbReference type="KEGG" id="fre:Franean1_1152"/>
<dbReference type="eggNOG" id="COG0335">
    <property type="taxonomic scope" value="Bacteria"/>
</dbReference>
<dbReference type="HOGENOM" id="CLU_103507_2_1_11"/>
<dbReference type="GO" id="GO:0022625">
    <property type="term" value="C:cytosolic large ribosomal subunit"/>
    <property type="evidence" value="ECO:0007669"/>
    <property type="project" value="TreeGrafter"/>
</dbReference>
<dbReference type="GO" id="GO:0003735">
    <property type="term" value="F:structural constituent of ribosome"/>
    <property type="evidence" value="ECO:0007669"/>
    <property type="project" value="InterPro"/>
</dbReference>
<dbReference type="GO" id="GO:0006412">
    <property type="term" value="P:translation"/>
    <property type="evidence" value="ECO:0007669"/>
    <property type="project" value="UniProtKB-UniRule"/>
</dbReference>
<dbReference type="FunFam" id="2.30.30.790:FF:000001">
    <property type="entry name" value="50S ribosomal protein L19"/>
    <property type="match status" value="1"/>
</dbReference>
<dbReference type="Gene3D" id="2.30.30.790">
    <property type="match status" value="1"/>
</dbReference>
<dbReference type="HAMAP" id="MF_00402">
    <property type="entry name" value="Ribosomal_bL19"/>
    <property type="match status" value="1"/>
</dbReference>
<dbReference type="InterPro" id="IPR001857">
    <property type="entry name" value="Ribosomal_bL19"/>
</dbReference>
<dbReference type="InterPro" id="IPR018257">
    <property type="entry name" value="Ribosomal_bL19_CS"/>
</dbReference>
<dbReference type="InterPro" id="IPR038657">
    <property type="entry name" value="Ribosomal_bL19_sf"/>
</dbReference>
<dbReference type="InterPro" id="IPR008991">
    <property type="entry name" value="Translation_prot_SH3-like_sf"/>
</dbReference>
<dbReference type="NCBIfam" id="TIGR01024">
    <property type="entry name" value="rplS_bact"/>
    <property type="match status" value="1"/>
</dbReference>
<dbReference type="PANTHER" id="PTHR15680:SF9">
    <property type="entry name" value="LARGE RIBOSOMAL SUBUNIT PROTEIN BL19M"/>
    <property type="match status" value="1"/>
</dbReference>
<dbReference type="PANTHER" id="PTHR15680">
    <property type="entry name" value="RIBOSOMAL PROTEIN L19"/>
    <property type="match status" value="1"/>
</dbReference>
<dbReference type="Pfam" id="PF01245">
    <property type="entry name" value="Ribosomal_L19"/>
    <property type="match status" value="1"/>
</dbReference>
<dbReference type="PIRSF" id="PIRSF002191">
    <property type="entry name" value="Ribosomal_L19"/>
    <property type="match status" value="1"/>
</dbReference>
<dbReference type="PRINTS" id="PR00061">
    <property type="entry name" value="RIBOSOMALL19"/>
</dbReference>
<dbReference type="SUPFAM" id="SSF50104">
    <property type="entry name" value="Translation proteins SH3-like domain"/>
    <property type="match status" value="1"/>
</dbReference>
<dbReference type="PROSITE" id="PS01015">
    <property type="entry name" value="RIBOSOMAL_L19"/>
    <property type="match status" value="1"/>
</dbReference>
<protein>
    <recommendedName>
        <fullName evidence="1">Large ribosomal subunit protein bL19</fullName>
    </recommendedName>
    <alternativeName>
        <fullName evidence="2">50S ribosomal protein L19</fullName>
    </alternativeName>
</protein>
<reference key="1">
    <citation type="journal article" date="2007" name="Genome Res.">
        <title>Genome characteristics of facultatively symbiotic Frankia sp. strains reflect host range and host plant biogeography.</title>
        <authorList>
            <person name="Normand P."/>
            <person name="Lapierre P."/>
            <person name="Tisa L.S."/>
            <person name="Gogarten J.P."/>
            <person name="Alloisio N."/>
            <person name="Bagnarol E."/>
            <person name="Bassi C.A."/>
            <person name="Berry A.M."/>
            <person name="Bickhart D.M."/>
            <person name="Choisne N."/>
            <person name="Couloux A."/>
            <person name="Cournoyer B."/>
            <person name="Cruveiller S."/>
            <person name="Daubin V."/>
            <person name="Demange N."/>
            <person name="Francino M.P."/>
            <person name="Goltsman E."/>
            <person name="Huang Y."/>
            <person name="Kopp O.R."/>
            <person name="Labarre L."/>
            <person name="Lapidus A."/>
            <person name="Lavire C."/>
            <person name="Marechal J."/>
            <person name="Martinez M."/>
            <person name="Mastronunzio J.E."/>
            <person name="Mullin B.C."/>
            <person name="Niemann J."/>
            <person name="Pujic P."/>
            <person name="Rawnsley T."/>
            <person name="Rouy Z."/>
            <person name="Schenowitz C."/>
            <person name="Sellstedt A."/>
            <person name="Tavares F."/>
            <person name="Tomkins J.P."/>
            <person name="Vallenet D."/>
            <person name="Valverde C."/>
            <person name="Wall L.G."/>
            <person name="Wang Y."/>
            <person name="Medigue C."/>
            <person name="Benson D.R."/>
        </authorList>
    </citation>
    <scope>NUCLEOTIDE SEQUENCE [LARGE SCALE GENOMIC DNA]</scope>
    <source>
        <strain>EAN1pec</strain>
    </source>
</reference>
<sequence length="118" mass="13550">MHTLDSLDAESRRTDVPEFWPGDTLKVHVRVVEGNRQRIQVFQGVVIRRQGGGVRETFTVRKVSFGVGVERTFPLHSPIVSRVEVVTRGDVRRAKLYYLRQLRGKAAKIKEKREPVGR</sequence>
<comment type="function">
    <text evidence="1">This protein is located at the 30S-50S ribosomal subunit interface and may play a role in the structure and function of the aminoacyl-tRNA binding site.</text>
</comment>
<comment type="similarity">
    <text evidence="1">Belongs to the bacterial ribosomal protein bL19 family.</text>
</comment>
<gene>
    <name evidence="1" type="primary">rplS</name>
    <name type="ordered locus">Franean1_1152</name>
</gene>
<organism>
    <name type="scientific">Parafrankia sp. (strain EAN1pec)</name>
    <dbReference type="NCBI Taxonomy" id="298653"/>
    <lineage>
        <taxon>Bacteria</taxon>
        <taxon>Bacillati</taxon>
        <taxon>Actinomycetota</taxon>
        <taxon>Actinomycetes</taxon>
        <taxon>Frankiales</taxon>
        <taxon>Frankiaceae</taxon>
        <taxon>Parafrankia</taxon>
    </lineage>
</organism>
<evidence type="ECO:0000255" key="1">
    <source>
        <dbReference type="HAMAP-Rule" id="MF_00402"/>
    </source>
</evidence>
<evidence type="ECO:0000305" key="2"/>
<proteinExistence type="inferred from homology"/>
<feature type="chain" id="PRO_1000193844" description="Large ribosomal subunit protein bL19">
    <location>
        <begin position="1"/>
        <end position="118"/>
    </location>
</feature>